<name>KCY_RHOPA</name>
<sequence>MIIAIDGPAASGKGTLAKRLAAHYGFRYLDTGVIYRAVAKAMLDAGADLTDEARAAEVARTLDPSRFDDPALKSHAVGEAASVVSAHPQVRAALVEFQKTFAAAPPGAVLDGRDIGTVICPDAEVKIFVVASPEVRAHRRFLEAQSRGEPADEAVILSDIVKRDERDKNRSAAPLKQAPDAVLLDNSYLDIEGGVRAAIDIVEAVRAGRRRV</sequence>
<organism>
    <name type="scientific">Rhodopseudomonas palustris (strain ATCC BAA-98 / CGA009)</name>
    <dbReference type="NCBI Taxonomy" id="258594"/>
    <lineage>
        <taxon>Bacteria</taxon>
        <taxon>Pseudomonadati</taxon>
        <taxon>Pseudomonadota</taxon>
        <taxon>Alphaproteobacteria</taxon>
        <taxon>Hyphomicrobiales</taxon>
        <taxon>Nitrobacteraceae</taxon>
        <taxon>Rhodopseudomonas</taxon>
    </lineage>
</organism>
<proteinExistence type="inferred from homology"/>
<feature type="chain" id="PRO_0000131963" description="Cytidylate kinase">
    <location>
        <begin position="1"/>
        <end position="212"/>
    </location>
</feature>
<feature type="binding site" evidence="1">
    <location>
        <begin position="7"/>
        <end position="15"/>
    </location>
    <ligand>
        <name>ATP</name>
        <dbReference type="ChEBI" id="CHEBI:30616"/>
    </ligand>
</feature>
<dbReference type="EC" id="2.7.4.25" evidence="1"/>
<dbReference type="EMBL" id="BX572593">
    <property type="protein sequence ID" value="CAE25507.1"/>
    <property type="molecule type" value="Genomic_DNA"/>
</dbReference>
<dbReference type="RefSeq" id="WP_011155634.1">
    <property type="nucleotide sequence ID" value="NZ_CP116810.1"/>
</dbReference>
<dbReference type="SMR" id="Q6NDP2"/>
<dbReference type="STRING" id="258594.RPA0063"/>
<dbReference type="GeneID" id="66891064"/>
<dbReference type="eggNOG" id="COG0283">
    <property type="taxonomic scope" value="Bacteria"/>
</dbReference>
<dbReference type="HOGENOM" id="CLU_079959_0_1_5"/>
<dbReference type="PhylomeDB" id="Q6NDP2"/>
<dbReference type="GO" id="GO:0005737">
    <property type="term" value="C:cytoplasm"/>
    <property type="evidence" value="ECO:0007669"/>
    <property type="project" value="UniProtKB-SubCell"/>
</dbReference>
<dbReference type="GO" id="GO:0005524">
    <property type="term" value="F:ATP binding"/>
    <property type="evidence" value="ECO:0007669"/>
    <property type="project" value="UniProtKB-UniRule"/>
</dbReference>
<dbReference type="GO" id="GO:0036430">
    <property type="term" value="F:CMP kinase activity"/>
    <property type="evidence" value="ECO:0007669"/>
    <property type="project" value="RHEA"/>
</dbReference>
<dbReference type="GO" id="GO:0036431">
    <property type="term" value="F:dCMP kinase activity"/>
    <property type="evidence" value="ECO:0007669"/>
    <property type="project" value="RHEA"/>
</dbReference>
<dbReference type="GO" id="GO:0006220">
    <property type="term" value="P:pyrimidine nucleotide metabolic process"/>
    <property type="evidence" value="ECO:0007669"/>
    <property type="project" value="UniProtKB-UniRule"/>
</dbReference>
<dbReference type="CDD" id="cd02020">
    <property type="entry name" value="CMPK"/>
    <property type="match status" value="1"/>
</dbReference>
<dbReference type="Gene3D" id="3.40.50.300">
    <property type="entry name" value="P-loop containing nucleotide triphosphate hydrolases"/>
    <property type="match status" value="1"/>
</dbReference>
<dbReference type="HAMAP" id="MF_00238">
    <property type="entry name" value="Cytidyl_kinase_type1"/>
    <property type="match status" value="1"/>
</dbReference>
<dbReference type="InterPro" id="IPR003136">
    <property type="entry name" value="Cytidylate_kin"/>
</dbReference>
<dbReference type="InterPro" id="IPR011994">
    <property type="entry name" value="Cytidylate_kinase_dom"/>
</dbReference>
<dbReference type="InterPro" id="IPR027417">
    <property type="entry name" value="P-loop_NTPase"/>
</dbReference>
<dbReference type="NCBIfam" id="TIGR00017">
    <property type="entry name" value="cmk"/>
    <property type="match status" value="1"/>
</dbReference>
<dbReference type="Pfam" id="PF02224">
    <property type="entry name" value="Cytidylate_kin"/>
    <property type="match status" value="1"/>
</dbReference>
<dbReference type="SUPFAM" id="SSF52540">
    <property type="entry name" value="P-loop containing nucleoside triphosphate hydrolases"/>
    <property type="match status" value="1"/>
</dbReference>
<comment type="catalytic activity">
    <reaction evidence="1">
        <text>CMP + ATP = CDP + ADP</text>
        <dbReference type="Rhea" id="RHEA:11600"/>
        <dbReference type="ChEBI" id="CHEBI:30616"/>
        <dbReference type="ChEBI" id="CHEBI:58069"/>
        <dbReference type="ChEBI" id="CHEBI:60377"/>
        <dbReference type="ChEBI" id="CHEBI:456216"/>
        <dbReference type="EC" id="2.7.4.25"/>
    </reaction>
</comment>
<comment type="catalytic activity">
    <reaction evidence="1">
        <text>dCMP + ATP = dCDP + ADP</text>
        <dbReference type="Rhea" id="RHEA:25094"/>
        <dbReference type="ChEBI" id="CHEBI:30616"/>
        <dbReference type="ChEBI" id="CHEBI:57566"/>
        <dbReference type="ChEBI" id="CHEBI:58593"/>
        <dbReference type="ChEBI" id="CHEBI:456216"/>
        <dbReference type="EC" id="2.7.4.25"/>
    </reaction>
</comment>
<comment type="subcellular location">
    <subcellularLocation>
        <location evidence="1">Cytoplasm</location>
    </subcellularLocation>
</comment>
<comment type="similarity">
    <text evidence="1">Belongs to the cytidylate kinase family. Type 1 subfamily.</text>
</comment>
<reference key="1">
    <citation type="journal article" date="2004" name="Nat. Biotechnol.">
        <title>Complete genome sequence of the metabolically versatile photosynthetic bacterium Rhodopseudomonas palustris.</title>
        <authorList>
            <person name="Larimer F.W."/>
            <person name="Chain P."/>
            <person name="Hauser L."/>
            <person name="Lamerdin J.E."/>
            <person name="Malfatti S."/>
            <person name="Do L."/>
            <person name="Land M.L."/>
            <person name="Pelletier D.A."/>
            <person name="Beatty J.T."/>
            <person name="Lang A.S."/>
            <person name="Tabita F.R."/>
            <person name="Gibson J.L."/>
            <person name="Hanson T.E."/>
            <person name="Bobst C."/>
            <person name="Torres y Torres J.L."/>
            <person name="Peres C."/>
            <person name="Harrison F.H."/>
            <person name="Gibson J."/>
            <person name="Harwood C.S."/>
        </authorList>
    </citation>
    <scope>NUCLEOTIDE SEQUENCE [LARGE SCALE GENOMIC DNA]</scope>
    <source>
        <strain>ATCC BAA-98 / CGA009</strain>
    </source>
</reference>
<protein>
    <recommendedName>
        <fullName evidence="1">Cytidylate kinase</fullName>
        <shortName evidence="1">CK</shortName>
        <ecNumber evidence="1">2.7.4.25</ecNumber>
    </recommendedName>
    <alternativeName>
        <fullName evidence="1">Cytidine monophosphate kinase</fullName>
        <shortName evidence="1">CMP kinase</shortName>
    </alternativeName>
</protein>
<accession>Q6NDP2</accession>
<evidence type="ECO:0000255" key="1">
    <source>
        <dbReference type="HAMAP-Rule" id="MF_00238"/>
    </source>
</evidence>
<gene>
    <name evidence="1" type="primary">cmk</name>
    <name type="ordered locus">RPA0063</name>
</gene>
<keyword id="KW-0067">ATP-binding</keyword>
<keyword id="KW-0963">Cytoplasm</keyword>
<keyword id="KW-0418">Kinase</keyword>
<keyword id="KW-0547">Nucleotide-binding</keyword>
<keyword id="KW-0808">Transferase</keyword>